<organism>
    <name type="scientific">Arabidopsis thaliana</name>
    <name type="common">Mouse-ear cress</name>
    <dbReference type="NCBI Taxonomy" id="3702"/>
    <lineage>
        <taxon>Eukaryota</taxon>
        <taxon>Viridiplantae</taxon>
        <taxon>Streptophyta</taxon>
        <taxon>Embryophyta</taxon>
        <taxon>Tracheophyta</taxon>
        <taxon>Spermatophyta</taxon>
        <taxon>Magnoliopsida</taxon>
        <taxon>eudicotyledons</taxon>
        <taxon>Gunneridae</taxon>
        <taxon>Pentapetalae</taxon>
        <taxon>rosids</taxon>
        <taxon>malvids</taxon>
        <taxon>Brassicales</taxon>
        <taxon>Brassicaceae</taxon>
        <taxon>Camelineae</taxon>
        <taxon>Arabidopsis</taxon>
    </lineage>
</organism>
<name>FB16_ARATH</name>
<dbReference type="EMBL" id="AC069252">
    <property type="protein sequence ID" value="AAF86564.1"/>
    <property type="molecule type" value="Genomic_DNA"/>
</dbReference>
<dbReference type="EMBL" id="CP002684">
    <property type="protein sequence ID" value="AEE30182.1"/>
    <property type="molecule type" value="Genomic_DNA"/>
</dbReference>
<dbReference type="PIR" id="H86352">
    <property type="entry name" value="H86352"/>
</dbReference>
<dbReference type="RefSeq" id="NP_173618.1">
    <property type="nucleotide sequence ID" value="NM_102048.1"/>
</dbReference>
<dbReference type="FunCoup" id="Q9LM64">
    <property type="interactions" value="3"/>
</dbReference>
<dbReference type="PaxDb" id="3702-AT1G21990.1"/>
<dbReference type="EnsemblPlants" id="AT1G21990.1">
    <property type="protein sequence ID" value="AT1G21990.1"/>
    <property type="gene ID" value="AT1G21990"/>
</dbReference>
<dbReference type="GeneID" id="838802"/>
<dbReference type="Gramene" id="AT1G21990.1">
    <property type="protein sequence ID" value="AT1G21990.1"/>
    <property type="gene ID" value="AT1G21990"/>
</dbReference>
<dbReference type="KEGG" id="ath:AT1G21990"/>
<dbReference type="Araport" id="AT1G21990"/>
<dbReference type="TAIR" id="AT1G21990"/>
<dbReference type="HOGENOM" id="CLU_010721_7_1_1"/>
<dbReference type="InParanoid" id="Q9LM64"/>
<dbReference type="OMA" id="FYCRSMP"/>
<dbReference type="PhylomeDB" id="Q9LM64"/>
<dbReference type="PRO" id="PR:Q9LM64"/>
<dbReference type="Proteomes" id="UP000006548">
    <property type="component" value="Chromosome 1"/>
</dbReference>
<dbReference type="ExpressionAtlas" id="Q9LM64">
    <property type="expression patterns" value="baseline and differential"/>
</dbReference>
<dbReference type="CDD" id="cd22160">
    <property type="entry name" value="F-box_AtFBL13-like"/>
    <property type="match status" value="1"/>
</dbReference>
<dbReference type="Gene3D" id="1.20.1280.50">
    <property type="match status" value="1"/>
</dbReference>
<dbReference type="InterPro" id="IPR036047">
    <property type="entry name" value="F-box-like_dom_sf"/>
</dbReference>
<dbReference type="InterPro" id="IPR053781">
    <property type="entry name" value="F-box_AtFBL13-like"/>
</dbReference>
<dbReference type="InterPro" id="IPR001810">
    <property type="entry name" value="F-box_dom"/>
</dbReference>
<dbReference type="InterPro" id="IPR006566">
    <property type="entry name" value="FBD"/>
</dbReference>
<dbReference type="InterPro" id="IPR055294">
    <property type="entry name" value="FBL60-like"/>
</dbReference>
<dbReference type="InterPro" id="IPR055411">
    <property type="entry name" value="LRR_FXL15/At3g58940/PEG3-like"/>
</dbReference>
<dbReference type="PANTHER" id="PTHR31293:SF23">
    <property type="entry name" value="F-BOX DOMAIN-CONTAINING PROTEIN"/>
    <property type="match status" value="1"/>
</dbReference>
<dbReference type="PANTHER" id="PTHR31293">
    <property type="entry name" value="RNI-LIKE SUPERFAMILY PROTEIN"/>
    <property type="match status" value="1"/>
</dbReference>
<dbReference type="Pfam" id="PF00646">
    <property type="entry name" value="F-box"/>
    <property type="match status" value="1"/>
</dbReference>
<dbReference type="Pfam" id="PF24758">
    <property type="entry name" value="LRR_At5g56370"/>
    <property type="match status" value="1"/>
</dbReference>
<dbReference type="SMART" id="SM00579">
    <property type="entry name" value="FBD"/>
    <property type="match status" value="1"/>
</dbReference>
<dbReference type="SUPFAM" id="SSF81383">
    <property type="entry name" value="F-box domain"/>
    <property type="match status" value="1"/>
</dbReference>
<dbReference type="SUPFAM" id="SSF52047">
    <property type="entry name" value="RNI-like"/>
    <property type="match status" value="1"/>
</dbReference>
<sequence>MHAQRVARDLISGSPDEILGKILSFLPTHHAATTSVLSKRWRNLLPLVDKLELTEDHPSGRCSLGFPDFVEKTLALLDRPCSVIKKVHLNCDHLHGESRFYSWIRTVLERGVLDFHLESSRMYRVETEFFTSNTLVELTISGALYPEGELPPGGLFFPALKRLSIVLVAFADCDMYDDFVLGCPVLEELILYYADDDQPPGWNGKVSSPSIKRLTISHDYPDYPETHIYVWFDTPSLVYLDYSGHVARRYTAEMGSLEEARLNLLPWEQLIDSDEEDDDFDGYGPRWEKRSKDATGLIAMISNVKTLHLSSDSLEVIHSLCKVMPAFQNLLKLSFESDKERGWQVVPLLLNSSPNLETLVIKGLVHKVTSRCGDACLCIRKKTRGECCLLTCQVKVLKIIGYRGTCREQKQMSHFLANLKCLETVKVRVEVDHREDNDASNTYLRITNALMKLPRVSSNCRIHFL</sequence>
<gene>
    <name type="ordered locus">At1g21990</name>
    <name type="ORF">F2E2.2</name>
</gene>
<feature type="chain" id="PRO_0000283294" description="Putative F-box protein At1g21990">
    <location>
        <begin position="1"/>
        <end position="465"/>
    </location>
</feature>
<feature type="domain" description="F-box">
    <location>
        <begin position="8"/>
        <end position="54"/>
    </location>
</feature>
<accession>Q9LM64</accession>
<reference key="1">
    <citation type="journal article" date="2000" name="Nature">
        <title>Sequence and analysis of chromosome 1 of the plant Arabidopsis thaliana.</title>
        <authorList>
            <person name="Theologis A."/>
            <person name="Ecker J.R."/>
            <person name="Palm C.J."/>
            <person name="Federspiel N.A."/>
            <person name="Kaul S."/>
            <person name="White O."/>
            <person name="Alonso J."/>
            <person name="Altafi H."/>
            <person name="Araujo R."/>
            <person name="Bowman C.L."/>
            <person name="Brooks S.Y."/>
            <person name="Buehler E."/>
            <person name="Chan A."/>
            <person name="Chao Q."/>
            <person name="Chen H."/>
            <person name="Cheuk R.F."/>
            <person name="Chin C.W."/>
            <person name="Chung M.K."/>
            <person name="Conn L."/>
            <person name="Conway A.B."/>
            <person name="Conway A.R."/>
            <person name="Creasy T.H."/>
            <person name="Dewar K."/>
            <person name="Dunn P."/>
            <person name="Etgu P."/>
            <person name="Feldblyum T.V."/>
            <person name="Feng J.-D."/>
            <person name="Fong B."/>
            <person name="Fujii C.Y."/>
            <person name="Gill J.E."/>
            <person name="Goldsmith A.D."/>
            <person name="Haas B."/>
            <person name="Hansen N.F."/>
            <person name="Hughes B."/>
            <person name="Huizar L."/>
            <person name="Hunter J.L."/>
            <person name="Jenkins J."/>
            <person name="Johnson-Hopson C."/>
            <person name="Khan S."/>
            <person name="Khaykin E."/>
            <person name="Kim C.J."/>
            <person name="Koo H.L."/>
            <person name="Kremenetskaia I."/>
            <person name="Kurtz D.B."/>
            <person name="Kwan A."/>
            <person name="Lam B."/>
            <person name="Langin-Hooper S."/>
            <person name="Lee A."/>
            <person name="Lee J.M."/>
            <person name="Lenz C.A."/>
            <person name="Li J.H."/>
            <person name="Li Y.-P."/>
            <person name="Lin X."/>
            <person name="Liu S.X."/>
            <person name="Liu Z.A."/>
            <person name="Luros J.S."/>
            <person name="Maiti R."/>
            <person name="Marziali A."/>
            <person name="Militscher J."/>
            <person name="Miranda M."/>
            <person name="Nguyen M."/>
            <person name="Nierman W.C."/>
            <person name="Osborne B.I."/>
            <person name="Pai G."/>
            <person name="Peterson J."/>
            <person name="Pham P.K."/>
            <person name="Rizzo M."/>
            <person name="Rooney T."/>
            <person name="Rowley D."/>
            <person name="Sakano H."/>
            <person name="Salzberg S.L."/>
            <person name="Schwartz J.R."/>
            <person name="Shinn P."/>
            <person name="Southwick A.M."/>
            <person name="Sun H."/>
            <person name="Tallon L.J."/>
            <person name="Tambunga G."/>
            <person name="Toriumi M.J."/>
            <person name="Town C.D."/>
            <person name="Utterback T."/>
            <person name="Van Aken S."/>
            <person name="Vaysberg M."/>
            <person name="Vysotskaia V.S."/>
            <person name="Walker M."/>
            <person name="Wu D."/>
            <person name="Yu G."/>
            <person name="Fraser C.M."/>
            <person name="Venter J.C."/>
            <person name="Davis R.W."/>
        </authorList>
    </citation>
    <scope>NUCLEOTIDE SEQUENCE [LARGE SCALE GENOMIC DNA]</scope>
    <source>
        <strain>cv. Columbia</strain>
    </source>
</reference>
<reference key="2">
    <citation type="journal article" date="2017" name="Plant J.">
        <title>Araport11: a complete reannotation of the Arabidopsis thaliana reference genome.</title>
        <authorList>
            <person name="Cheng C.Y."/>
            <person name="Krishnakumar V."/>
            <person name="Chan A.P."/>
            <person name="Thibaud-Nissen F."/>
            <person name="Schobel S."/>
            <person name="Town C.D."/>
        </authorList>
    </citation>
    <scope>GENOME REANNOTATION</scope>
    <source>
        <strain>cv. Columbia</strain>
    </source>
</reference>
<proteinExistence type="predicted"/>
<protein>
    <recommendedName>
        <fullName>Putative F-box protein At1g21990</fullName>
    </recommendedName>
</protein>
<keyword id="KW-1185">Reference proteome</keyword>